<evidence type="ECO:0000255" key="1">
    <source>
        <dbReference type="HAMAP-Rule" id="MF_00247"/>
    </source>
</evidence>
<reference key="1">
    <citation type="journal article" date="2009" name="BMC Genomics">
        <title>Pseudogene accumulation in the evolutionary histories of Salmonella enterica serovars Paratyphi A and Typhi.</title>
        <authorList>
            <person name="Holt K.E."/>
            <person name="Thomson N.R."/>
            <person name="Wain J."/>
            <person name="Langridge G.C."/>
            <person name="Hasan R."/>
            <person name="Bhutta Z.A."/>
            <person name="Quail M.A."/>
            <person name="Norbertczak H."/>
            <person name="Walker D."/>
            <person name="Simmonds M."/>
            <person name="White B."/>
            <person name="Bason N."/>
            <person name="Mungall K."/>
            <person name="Dougan G."/>
            <person name="Parkhill J."/>
        </authorList>
    </citation>
    <scope>NUCLEOTIDE SEQUENCE [LARGE SCALE GENOMIC DNA]</scope>
    <source>
        <strain>AKU_12601</strain>
    </source>
</reference>
<proteinExistence type="inferred from homology"/>
<organism>
    <name type="scientific">Salmonella paratyphi A (strain AKU_12601)</name>
    <dbReference type="NCBI Taxonomy" id="554290"/>
    <lineage>
        <taxon>Bacteria</taxon>
        <taxon>Pseudomonadati</taxon>
        <taxon>Pseudomonadota</taxon>
        <taxon>Gammaproteobacteria</taxon>
        <taxon>Enterobacterales</taxon>
        <taxon>Enterobacteriaceae</taxon>
        <taxon>Salmonella</taxon>
    </lineage>
</organism>
<feature type="chain" id="PRO_1000100861" description="Soluble pyridine nucleotide transhydrogenase">
    <location>
        <begin position="1"/>
        <end position="466"/>
    </location>
</feature>
<feature type="binding site" evidence="1">
    <location>
        <begin position="36"/>
        <end position="45"/>
    </location>
    <ligand>
        <name>FAD</name>
        <dbReference type="ChEBI" id="CHEBI:57692"/>
    </ligand>
</feature>
<accession>B5BJN6</accession>
<name>STHA_SALPK</name>
<protein>
    <recommendedName>
        <fullName evidence="1">Soluble pyridine nucleotide transhydrogenase</fullName>
        <shortName evidence="1">STH</shortName>
        <ecNumber evidence="1">1.6.1.1</ecNumber>
    </recommendedName>
    <alternativeName>
        <fullName evidence="1">NAD(P)(+) transhydrogenase [B-specific]</fullName>
    </alternativeName>
</protein>
<sequence>MPHSWDYDAVVIGSGPGGEGAAMGLVKQGARVAVIERYHNVGGGCTHWGTIPSKALRHAVSRIIEFNQNPLYSDHSRLLRSSFADILNHADNVINQQTRMRQGFYERNHCEILQGNAHFIDEHTLALECHDGTVETLTAEKFVIACGSRPYHPNDVDFSHPRIYDSDSILSLHHEPRHVIIYGAGVIGCEYASIFRGMDVKVDLINTRDRLLAFLDQEMSDSLSYHFWNSGVVIRHNEEYEKIEGCDDGVIMHLKSGKKLKADCLLYANGRTGNTDSLALENIGLETDSRGQLKVNSMYQTALPHVYAVGDVIGYPSLASAAYDQGRIAAQALVKGEATAHLIEDIPTGIYTIPEISSVGKTEQQLTAMKVPYEVGRAQFKHLARAQIVGMNVGTLKILFHRETKEILGIHCFGERAAEIIHIGQAIMEQKGGGNTIEYFVNTTFNYPTMAEAYRVAALNGLNRLF</sequence>
<dbReference type="EC" id="1.6.1.1" evidence="1"/>
<dbReference type="EMBL" id="FM200053">
    <property type="protein sequence ID" value="CAR61972.1"/>
    <property type="molecule type" value="Genomic_DNA"/>
</dbReference>
<dbReference type="RefSeq" id="WP_001120789.1">
    <property type="nucleotide sequence ID" value="NC_011147.1"/>
</dbReference>
<dbReference type="SMR" id="B5BJN6"/>
<dbReference type="GeneID" id="66758375"/>
<dbReference type="KEGG" id="sek:SSPA3689"/>
<dbReference type="HOGENOM" id="CLU_016755_0_0_6"/>
<dbReference type="Proteomes" id="UP000001869">
    <property type="component" value="Chromosome"/>
</dbReference>
<dbReference type="GO" id="GO:0005829">
    <property type="term" value="C:cytosol"/>
    <property type="evidence" value="ECO:0007669"/>
    <property type="project" value="TreeGrafter"/>
</dbReference>
<dbReference type="GO" id="GO:0004148">
    <property type="term" value="F:dihydrolipoyl dehydrogenase (NADH) activity"/>
    <property type="evidence" value="ECO:0007669"/>
    <property type="project" value="TreeGrafter"/>
</dbReference>
<dbReference type="GO" id="GO:0050660">
    <property type="term" value="F:flavin adenine dinucleotide binding"/>
    <property type="evidence" value="ECO:0007669"/>
    <property type="project" value="TreeGrafter"/>
</dbReference>
<dbReference type="GO" id="GO:0003957">
    <property type="term" value="F:NAD(P)+ transhydrogenase (Si-specific) activity"/>
    <property type="evidence" value="ECO:0007669"/>
    <property type="project" value="UniProtKB-UniRule"/>
</dbReference>
<dbReference type="GO" id="GO:0006103">
    <property type="term" value="P:2-oxoglutarate metabolic process"/>
    <property type="evidence" value="ECO:0007669"/>
    <property type="project" value="TreeGrafter"/>
</dbReference>
<dbReference type="GO" id="GO:0006739">
    <property type="term" value="P:NADP metabolic process"/>
    <property type="evidence" value="ECO:0007669"/>
    <property type="project" value="UniProtKB-UniRule"/>
</dbReference>
<dbReference type="FunFam" id="3.30.390.30:FF:000002">
    <property type="entry name" value="Soluble pyridine nucleotide transhydrogenase"/>
    <property type="match status" value="1"/>
</dbReference>
<dbReference type="FunFam" id="3.50.50.60:FF:000008">
    <property type="entry name" value="Soluble pyridine nucleotide transhydrogenase"/>
    <property type="match status" value="1"/>
</dbReference>
<dbReference type="Gene3D" id="3.30.390.30">
    <property type="match status" value="1"/>
</dbReference>
<dbReference type="Gene3D" id="3.50.50.60">
    <property type="entry name" value="FAD/NAD(P)-binding domain"/>
    <property type="match status" value="2"/>
</dbReference>
<dbReference type="HAMAP" id="MF_00247">
    <property type="entry name" value="SthA"/>
    <property type="match status" value="1"/>
</dbReference>
<dbReference type="InterPro" id="IPR050151">
    <property type="entry name" value="Class-I_Pyr_Nuc-Dis_Oxidored"/>
</dbReference>
<dbReference type="InterPro" id="IPR036188">
    <property type="entry name" value="FAD/NAD-bd_sf"/>
</dbReference>
<dbReference type="InterPro" id="IPR023753">
    <property type="entry name" value="FAD/NAD-binding_dom"/>
</dbReference>
<dbReference type="InterPro" id="IPR016156">
    <property type="entry name" value="FAD/NAD-linked_Rdtase_dimer_sf"/>
</dbReference>
<dbReference type="InterPro" id="IPR001100">
    <property type="entry name" value="Pyr_nuc-diS_OxRdtase"/>
</dbReference>
<dbReference type="InterPro" id="IPR004099">
    <property type="entry name" value="Pyr_nucl-diS_OxRdtase_dimer"/>
</dbReference>
<dbReference type="InterPro" id="IPR022962">
    <property type="entry name" value="STH_gammaproteobact"/>
</dbReference>
<dbReference type="NCBIfam" id="NF003585">
    <property type="entry name" value="PRK05249.1"/>
    <property type="match status" value="1"/>
</dbReference>
<dbReference type="PANTHER" id="PTHR22912">
    <property type="entry name" value="DISULFIDE OXIDOREDUCTASE"/>
    <property type="match status" value="1"/>
</dbReference>
<dbReference type="PANTHER" id="PTHR22912:SF93">
    <property type="entry name" value="SOLUBLE PYRIDINE NUCLEOTIDE TRANSHYDROGENASE"/>
    <property type="match status" value="1"/>
</dbReference>
<dbReference type="Pfam" id="PF07992">
    <property type="entry name" value="Pyr_redox_2"/>
    <property type="match status" value="1"/>
</dbReference>
<dbReference type="Pfam" id="PF02852">
    <property type="entry name" value="Pyr_redox_dim"/>
    <property type="match status" value="1"/>
</dbReference>
<dbReference type="PIRSF" id="PIRSF000350">
    <property type="entry name" value="Mercury_reductase_MerA"/>
    <property type="match status" value="1"/>
</dbReference>
<dbReference type="PRINTS" id="PR00368">
    <property type="entry name" value="FADPNR"/>
</dbReference>
<dbReference type="PRINTS" id="PR00411">
    <property type="entry name" value="PNDRDTASEI"/>
</dbReference>
<dbReference type="SUPFAM" id="SSF51905">
    <property type="entry name" value="FAD/NAD(P)-binding domain"/>
    <property type="match status" value="1"/>
</dbReference>
<dbReference type="SUPFAM" id="SSF55424">
    <property type="entry name" value="FAD/NAD-linked reductases, dimerisation (C-terminal) domain"/>
    <property type="match status" value="1"/>
</dbReference>
<comment type="function">
    <text evidence="1">Conversion of NADPH, generated by peripheral catabolic pathways, to NADH, which can enter the respiratory chain for energy generation.</text>
</comment>
<comment type="catalytic activity">
    <reaction evidence="1">
        <text>NAD(+) + NADPH = NADH + NADP(+)</text>
        <dbReference type="Rhea" id="RHEA:11692"/>
        <dbReference type="ChEBI" id="CHEBI:57540"/>
        <dbReference type="ChEBI" id="CHEBI:57783"/>
        <dbReference type="ChEBI" id="CHEBI:57945"/>
        <dbReference type="ChEBI" id="CHEBI:58349"/>
        <dbReference type="EC" id="1.6.1.1"/>
    </reaction>
</comment>
<comment type="cofactor">
    <cofactor evidence="1">
        <name>FAD</name>
        <dbReference type="ChEBI" id="CHEBI:57692"/>
    </cofactor>
    <text evidence="1">Binds 1 FAD per subunit.</text>
</comment>
<comment type="subcellular location">
    <subcellularLocation>
        <location evidence="1">Cytoplasm</location>
    </subcellularLocation>
</comment>
<comment type="similarity">
    <text evidence="1">Belongs to the class-I pyridine nucleotide-disulfide oxidoreductase family.</text>
</comment>
<keyword id="KW-0963">Cytoplasm</keyword>
<keyword id="KW-0274">FAD</keyword>
<keyword id="KW-0285">Flavoprotein</keyword>
<keyword id="KW-0520">NAD</keyword>
<keyword id="KW-0521">NADP</keyword>
<keyword id="KW-0560">Oxidoreductase</keyword>
<gene>
    <name evidence="1" type="primary">sthA</name>
    <name evidence="1" type="synonym">udhA</name>
    <name type="ordered locus">SSPA3689</name>
</gene>